<gene>
    <name type="primary">NAA20</name>
    <name type="synonym">NAT5</name>
</gene>
<evidence type="ECO:0000255" key="1">
    <source>
        <dbReference type="PROSITE-ProRule" id="PRU00532"/>
    </source>
</evidence>
<evidence type="ECO:0000269" key="2">
    <source>
    </source>
</evidence>
<evidence type="ECO:0000269" key="3">
    <source>
    </source>
</evidence>
<evidence type="ECO:0000269" key="4">
    <source>
    </source>
</evidence>
<evidence type="ECO:0000269" key="5">
    <source>
    </source>
</evidence>
<evidence type="ECO:0000303" key="6">
    <source>
    </source>
</evidence>
<evidence type="ECO:0000305" key="7"/>
<evidence type="ECO:0007829" key="8">
    <source>
        <dbReference type="PDB" id="7STX"/>
    </source>
</evidence>
<evidence type="ECO:0007829" key="9">
    <source>
        <dbReference type="PDB" id="8G0L"/>
    </source>
</evidence>
<keyword id="KW-0002">3D-structure</keyword>
<keyword id="KW-0012">Acyltransferase</keyword>
<keyword id="KW-0025">Alternative splicing</keyword>
<keyword id="KW-0963">Cytoplasm</keyword>
<keyword id="KW-0225">Disease variant</keyword>
<keyword id="KW-0991">Intellectual disability</keyword>
<keyword id="KW-0539">Nucleus</keyword>
<keyword id="KW-1267">Proteomics identification</keyword>
<keyword id="KW-1185">Reference proteome</keyword>
<keyword id="KW-0808">Transferase</keyword>
<name>NAA20_HUMAN</name>
<feature type="chain" id="PRO_0000074534" description="N-alpha-acetyltransferase 20">
    <location>
        <begin position="1"/>
        <end position="178"/>
    </location>
</feature>
<feature type="domain" description="N-acetyltransferase" evidence="1">
    <location>
        <begin position="2"/>
        <end position="157"/>
    </location>
</feature>
<feature type="splice variant" id="VSP_045644" description="In isoform 2." evidence="6">
    <original>KGGFFVDLFVRVSNQVAVNMYKQLGYSVYRTVIEYYSASNGEPDEDAYDMRKALSRDTEKKSIIPLPHPVRPEDIE</original>
    <variation>YEESTFQGY</variation>
    <location>
        <begin position="103"/>
        <end position="178"/>
    </location>
</feature>
<feature type="sequence variant" id="VAR_088425" description="In MRT73; decreases interaction with NAA25; may reduce protein capacity to acetylate Met-Glu N-terminal peptides; does not affect protein stability; dbSNP:rs752372862." evidence="5">
    <original>L</original>
    <variation>P</variation>
    <location>
        <position position="4"/>
    </location>
</feature>
<feature type="sequence variant" id="VAR_088426" description="In MRT73; dbSNP:rs755734957." evidence="5">
    <location>
        <begin position="34"/>
        <end position="178"/>
    </location>
</feature>
<feature type="sequence variant" id="VAR_086809" description="In MRT73; decreased complex formation with NAA25 and decreased N-acetylation catalytic activity in vitro for all 4 types of substrates; does not affect protein stability; dbSNP:rs2146464332." evidence="4">
    <original>M</original>
    <variation>V</variation>
    <location>
        <position position="54"/>
    </location>
</feature>
<feature type="sequence variant" id="VAR_086810" description="In MRT73; strong decrease in N-acetylation catalytic activity in vitro for substrates Met-Glu, Met-Asn and Met-Gln, but not Met-Asp; does not affect protein stability; dbSNP:rs768029717." evidence="4">
    <original>A</original>
    <variation>V</variation>
    <location>
        <position position="80"/>
    </location>
</feature>
<feature type="sequence conflict" description="In Ref. 2; CAB66576." evidence="7" ref="2">
    <original>E</original>
    <variation>V</variation>
    <location>
        <position position="47"/>
    </location>
</feature>
<feature type="strand" evidence="8">
    <location>
        <begin position="4"/>
        <end position="6"/>
    </location>
</feature>
<feature type="strand" evidence="8">
    <location>
        <begin position="11"/>
        <end position="14"/>
    </location>
</feature>
<feature type="turn" evidence="8">
    <location>
        <begin position="15"/>
        <end position="18"/>
    </location>
</feature>
<feature type="strand" evidence="8">
    <location>
        <begin position="21"/>
        <end position="23"/>
    </location>
</feature>
<feature type="helix" evidence="8">
    <location>
        <begin position="28"/>
        <end position="37"/>
    </location>
</feature>
<feature type="helix" evidence="9">
    <location>
        <begin position="40"/>
        <end position="42"/>
    </location>
</feature>
<feature type="strand" evidence="8">
    <location>
        <begin position="44"/>
        <end position="48"/>
    </location>
</feature>
<feature type="strand" evidence="8">
    <location>
        <begin position="51"/>
        <end position="53"/>
    </location>
</feature>
<feature type="turn" evidence="8">
    <location>
        <begin position="65"/>
        <end position="68"/>
    </location>
</feature>
<feature type="strand" evidence="9">
    <location>
        <begin position="71"/>
        <end position="79"/>
    </location>
</feature>
<feature type="helix" evidence="9">
    <location>
        <begin position="81"/>
        <end position="83"/>
    </location>
</feature>
<feature type="strand" evidence="8">
    <location>
        <begin position="85"/>
        <end position="87"/>
    </location>
</feature>
<feature type="helix" evidence="8">
    <location>
        <begin position="88"/>
        <end position="102"/>
    </location>
</feature>
<feature type="strand" evidence="8">
    <location>
        <begin position="111"/>
        <end position="113"/>
    </location>
</feature>
<feature type="helix" evidence="8">
    <location>
        <begin position="117"/>
        <end position="126"/>
    </location>
</feature>
<feature type="strand" evidence="8">
    <location>
        <begin position="129"/>
        <end position="138"/>
    </location>
</feature>
<feature type="strand" evidence="8">
    <location>
        <begin position="147"/>
        <end position="153"/>
    </location>
</feature>
<protein>
    <recommendedName>
        <fullName>N-alpha-acetyltransferase 20</fullName>
        <ecNumber evidence="2 4">2.3.1.254</ecNumber>
    </recommendedName>
    <alternativeName>
        <fullName>Methionine N-acetyltransferase</fullName>
    </alternativeName>
    <alternativeName>
        <fullName>N-acetyltransferase 5</fullName>
    </alternativeName>
    <alternativeName>
        <fullName>N-terminal acetyltransferase B complex catalytic subunit NAA20</fullName>
    </alternativeName>
    <alternativeName>
        <fullName>N-terminal acetyltransferase B complex catalytic subunit NAT5</fullName>
        <shortName>NatB complex subunit NAT5</shortName>
    </alternativeName>
    <alternativeName>
        <fullName>NatB catalytic subunit</fullName>
    </alternativeName>
</protein>
<reference key="1">
    <citation type="submission" date="1998-08" db="EMBL/GenBank/DDBJ databases">
        <title>Human N-terminal acetyltransferase complex ard1 subunit homologue, complete CDS.</title>
        <authorList>
            <person name="Liu T."/>
            <person name="Tao J."/>
            <person name="Zhang J."/>
            <person name="Li W."/>
            <person name="Ye M."/>
            <person name="Zhou J."/>
            <person name="Wu J."/>
            <person name="Shen Y."/>
            <person name="Yu M."/>
            <person name="Chen S."/>
            <person name="Mao M."/>
            <person name="Chen Z."/>
        </authorList>
    </citation>
    <scope>NUCLEOTIDE SEQUENCE [MRNA] (ISOFORM 1)</scope>
</reference>
<reference key="2">
    <citation type="journal article" date="2001" name="Genome Res.">
        <title>Towards a catalog of human genes and proteins: sequencing and analysis of 500 novel complete protein coding human cDNAs.</title>
        <authorList>
            <person name="Wiemann S."/>
            <person name="Weil B."/>
            <person name="Wellenreuther R."/>
            <person name="Gassenhuber J."/>
            <person name="Glassl S."/>
            <person name="Ansorge W."/>
            <person name="Boecher M."/>
            <person name="Bloecker H."/>
            <person name="Bauersachs S."/>
            <person name="Blum H."/>
            <person name="Lauber J."/>
            <person name="Duesterhoeft A."/>
            <person name="Beyer A."/>
            <person name="Koehrer K."/>
            <person name="Strack N."/>
            <person name="Mewes H.-W."/>
            <person name="Ottenwaelder B."/>
            <person name="Obermaier B."/>
            <person name="Tampe J."/>
            <person name="Heubner D."/>
            <person name="Wambutt R."/>
            <person name="Korn B."/>
            <person name="Klein M."/>
            <person name="Poustka A."/>
        </authorList>
    </citation>
    <scope>NUCLEOTIDE SEQUENCE [LARGE SCALE MRNA] (ISOFORM 1)</scope>
    <source>
        <tissue>Brain</tissue>
    </source>
</reference>
<reference key="3">
    <citation type="journal article" date="2004" name="Nat. Genet.">
        <title>Complete sequencing and characterization of 21,243 full-length human cDNAs.</title>
        <authorList>
            <person name="Ota T."/>
            <person name="Suzuki Y."/>
            <person name="Nishikawa T."/>
            <person name="Otsuki T."/>
            <person name="Sugiyama T."/>
            <person name="Irie R."/>
            <person name="Wakamatsu A."/>
            <person name="Hayashi K."/>
            <person name="Sato H."/>
            <person name="Nagai K."/>
            <person name="Kimura K."/>
            <person name="Makita H."/>
            <person name="Sekine M."/>
            <person name="Obayashi M."/>
            <person name="Nishi T."/>
            <person name="Shibahara T."/>
            <person name="Tanaka T."/>
            <person name="Ishii S."/>
            <person name="Yamamoto J."/>
            <person name="Saito K."/>
            <person name="Kawai Y."/>
            <person name="Isono Y."/>
            <person name="Nakamura Y."/>
            <person name="Nagahari K."/>
            <person name="Murakami K."/>
            <person name="Yasuda T."/>
            <person name="Iwayanagi T."/>
            <person name="Wagatsuma M."/>
            <person name="Shiratori A."/>
            <person name="Sudo H."/>
            <person name="Hosoiri T."/>
            <person name="Kaku Y."/>
            <person name="Kodaira H."/>
            <person name="Kondo H."/>
            <person name="Sugawara M."/>
            <person name="Takahashi M."/>
            <person name="Kanda K."/>
            <person name="Yokoi T."/>
            <person name="Furuya T."/>
            <person name="Kikkawa E."/>
            <person name="Omura Y."/>
            <person name="Abe K."/>
            <person name="Kamihara K."/>
            <person name="Katsuta N."/>
            <person name="Sato K."/>
            <person name="Tanikawa M."/>
            <person name="Yamazaki M."/>
            <person name="Ninomiya K."/>
            <person name="Ishibashi T."/>
            <person name="Yamashita H."/>
            <person name="Murakawa K."/>
            <person name="Fujimori K."/>
            <person name="Tanai H."/>
            <person name="Kimata M."/>
            <person name="Watanabe M."/>
            <person name="Hiraoka S."/>
            <person name="Chiba Y."/>
            <person name="Ishida S."/>
            <person name="Ono Y."/>
            <person name="Takiguchi S."/>
            <person name="Watanabe S."/>
            <person name="Yosida M."/>
            <person name="Hotuta T."/>
            <person name="Kusano J."/>
            <person name="Kanehori K."/>
            <person name="Takahashi-Fujii A."/>
            <person name="Hara H."/>
            <person name="Tanase T.-O."/>
            <person name="Nomura Y."/>
            <person name="Togiya S."/>
            <person name="Komai F."/>
            <person name="Hara R."/>
            <person name="Takeuchi K."/>
            <person name="Arita M."/>
            <person name="Imose N."/>
            <person name="Musashino K."/>
            <person name="Yuuki H."/>
            <person name="Oshima A."/>
            <person name="Sasaki N."/>
            <person name="Aotsuka S."/>
            <person name="Yoshikawa Y."/>
            <person name="Matsunawa H."/>
            <person name="Ichihara T."/>
            <person name="Shiohata N."/>
            <person name="Sano S."/>
            <person name="Moriya S."/>
            <person name="Momiyama H."/>
            <person name="Satoh N."/>
            <person name="Takami S."/>
            <person name="Terashima Y."/>
            <person name="Suzuki O."/>
            <person name="Nakagawa S."/>
            <person name="Senoh A."/>
            <person name="Mizoguchi H."/>
            <person name="Goto Y."/>
            <person name="Shimizu F."/>
            <person name="Wakebe H."/>
            <person name="Hishigaki H."/>
            <person name="Watanabe T."/>
            <person name="Sugiyama A."/>
            <person name="Takemoto M."/>
            <person name="Kawakami B."/>
            <person name="Yamazaki M."/>
            <person name="Watanabe K."/>
            <person name="Kumagai A."/>
            <person name="Itakura S."/>
            <person name="Fukuzumi Y."/>
            <person name="Fujimori Y."/>
            <person name="Komiyama M."/>
            <person name="Tashiro H."/>
            <person name="Tanigami A."/>
            <person name="Fujiwara T."/>
            <person name="Ono T."/>
            <person name="Yamada K."/>
            <person name="Fujii Y."/>
            <person name="Ozaki K."/>
            <person name="Hirao M."/>
            <person name="Ohmori Y."/>
            <person name="Kawabata A."/>
            <person name="Hikiji T."/>
            <person name="Kobatake N."/>
            <person name="Inagaki H."/>
            <person name="Ikema Y."/>
            <person name="Okamoto S."/>
            <person name="Okitani R."/>
            <person name="Kawakami T."/>
            <person name="Noguchi S."/>
            <person name="Itoh T."/>
            <person name="Shigeta K."/>
            <person name="Senba T."/>
            <person name="Matsumura K."/>
            <person name="Nakajima Y."/>
            <person name="Mizuno T."/>
            <person name="Morinaga M."/>
            <person name="Sasaki M."/>
            <person name="Togashi T."/>
            <person name="Oyama M."/>
            <person name="Hata H."/>
            <person name="Watanabe M."/>
            <person name="Komatsu T."/>
            <person name="Mizushima-Sugano J."/>
            <person name="Satoh T."/>
            <person name="Shirai Y."/>
            <person name="Takahashi Y."/>
            <person name="Nakagawa K."/>
            <person name="Okumura K."/>
            <person name="Nagase T."/>
            <person name="Nomura N."/>
            <person name="Kikuchi H."/>
            <person name="Masuho Y."/>
            <person name="Yamashita R."/>
            <person name="Nakai K."/>
            <person name="Yada T."/>
            <person name="Nakamura Y."/>
            <person name="Ohara O."/>
            <person name="Isogai T."/>
            <person name="Sugano S."/>
        </authorList>
    </citation>
    <scope>NUCLEOTIDE SEQUENCE [LARGE SCALE MRNA] (ISOFORM 1)</scope>
    <source>
        <tissue>Brain</tissue>
    </source>
</reference>
<reference key="4">
    <citation type="journal article" date="2001" name="Nature">
        <title>The DNA sequence and comparative analysis of human chromosome 20.</title>
        <authorList>
            <person name="Deloukas P."/>
            <person name="Matthews L.H."/>
            <person name="Ashurst J.L."/>
            <person name="Burton J."/>
            <person name="Gilbert J.G.R."/>
            <person name="Jones M."/>
            <person name="Stavrides G."/>
            <person name="Almeida J.P."/>
            <person name="Babbage A.K."/>
            <person name="Bagguley C.L."/>
            <person name="Bailey J."/>
            <person name="Barlow K.F."/>
            <person name="Bates K.N."/>
            <person name="Beard L.M."/>
            <person name="Beare D.M."/>
            <person name="Beasley O.P."/>
            <person name="Bird C.P."/>
            <person name="Blakey S.E."/>
            <person name="Bridgeman A.M."/>
            <person name="Brown A.J."/>
            <person name="Buck D."/>
            <person name="Burrill W.D."/>
            <person name="Butler A.P."/>
            <person name="Carder C."/>
            <person name="Carter N.P."/>
            <person name="Chapman J.C."/>
            <person name="Clamp M."/>
            <person name="Clark G."/>
            <person name="Clark L.N."/>
            <person name="Clark S.Y."/>
            <person name="Clee C.M."/>
            <person name="Clegg S."/>
            <person name="Cobley V.E."/>
            <person name="Collier R.E."/>
            <person name="Connor R.E."/>
            <person name="Corby N.R."/>
            <person name="Coulson A."/>
            <person name="Coville G.J."/>
            <person name="Deadman R."/>
            <person name="Dhami P.D."/>
            <person name="Dunn M."/>
            <person name="Ellington A.G."/>
            <person name="Frankland J.A."/>
            <person name="Fraser A."/>
            <person name="French L."/>
            <person name="Garner P."/>
            <person name="Grafham D.V."/>
            <person name="Griffiths C."/>
            <person name="Griffiths M.N.D."/>
            <person name="Gwilliam R."/>
            <person name="Hall R.E."/>
            <person name="Hammond S."/>
            <person name="Harley J.L."/>
            <person name="Heath P.D."/>
            <person name="Ho S."/>
            <person name="Holden J.L."/>
            <person name="Howden P.J."/>
            <person name="Huckle E."/>
            <person name="Hunt A.R."/>
            <person name="Hunt S.E."/>
            <person name="Jekosch K."/>
            <person name="Johnson C.M."/>
            <person name="Johnson D."/>
            <person name="Kay M.P."/>
            <person name="Kimberley A.M."/>
            <person name="King A."/>
            <person name="Knights A."/>
            <person name="Laird G.K."/>
            <person name="Lawlor S."/>
            <person name="Lehvaeslaiho M.H."/>
            <person name="Leversha M.A."/>
            <person name="Lloyd C."/>
            <person name="Lloyd D.M."/>
            <person name="Lovell J.D."/>
            <person name="Marsh V.L."/>
            <person name="Martin S.L."/>
            <person name="McConnachie L.J."/>
            <person name="McLay K."/>
            <person name="McMurray A.A."/>
            <person name="Milne S.A."/>
            <person name="Mistry D."/>
            <person name="Moore M.J.F."/>
            <person name="Mullikin J.C."/>
            <person name="Nickerson T."/>
            <person name="Oliver K."/>
            <person name="Parker A."/>
            <person name="Patel R."/>
            <person name="Pearce T.A.V."/>
            <person name="Peck A.I."/>
            <person name="Phillimore B.J.C.T."/>
            <person name="Prathalingam S.R."/>
            <person name="Plumb R.W."/>
            <person name="Ramsay H."/>
            <person name="Rice C.M."/>
            <person name="Ross M.T."/>
            <person name="Scott C.E."/>
            <person name="Sehra H.K."/>
            <person name="Shownkeen R."/>
            <person name="Sims S."/>
            <person name="Skuce C.D."/>
            <person name="Smith M.L."/>
            <person name="Soderlund C."/>
            <person name="Steward C.A."/>
            <person name="Sulston J.E."/>
            <person name="Swann R.M."/>
            <person name="Sycamore N."/>
            <person name="Taylor R."/>
            <person name="Tee L."/>
            <person name="Thomas D.W."/>
            <person name="Thorpe A."/>
            <person name="Tracey A."/>
            <person name="Tromans A.C."/>
            <person name="Vaudin M."/>
            <person name="Wall M."/>
            <person name="Wallis J.M."/>
            <person name="Whitehead S.L."/>
            <person name="Whittaker P."/>
            <person name="Willey D.L."/>
            <person name="Williams L."/>
            <person name="Williams S.A."/>
            <person name="Wilming L."/>
            <person name="Wray P.W."/>
            <person name="Hubbard T."/>
            <person name="Durbin R.M."/>
            <person name="Bentley D.R."/>
            <person name="Beck S."/>
            <person name="Rogers J."/>
        </authorList>
    </citation>
    <scope>NUCLEOTIDE SEQUENCE [LARGE SCALE GENOMIC DNA]</scope>
</reference>
<reference key="5">
    <citation type="submission" date="2005-09" db="EMBL/GenBank/DDBJ databases">
        <authorList>
            <person name="Mural R.J."/>
            <person name="Istrail S."/>
            <person name="Sutton G.G."/>
            <person name="Florea L."/>
            <person name="Halpern A.L."/>
            <person name="Mobarry C.M."/>
            <person name="Lippert R."/>
            <person name="Walenz B."/>
            <person name="Shatkay H."/>
            <person name="Dew I."/>
            <person name="Miller J.R."/>
            <person name="Flanigan M.J."/>
            <person name="Edwards N.J."/>
            <person name="Bolanos R."/>
            <person name="Fasulo D."/>
            <person name="Halldorsson B.V."/>
            <person name="Hannenhalli S."/>
            <person name="Turner R."/>
            <person name="Yooseph S."/>
            <person name="Lu F."/>
            <person name="Nusskern D.R."/>
            <person name="Shue B.C."/>
            <person name="Zheng X.H."/>
            <person name="Zhong F."/>
            <person name="Delcher A.L."/>
            <person name="Huson D.H."/>
            <person name="Kravitz S.A."/>
            <person name="Mouchard L."/>
            <person name="Reinert K."/>
            <person name="Remington K.A."/>
            <person name="Clark A.G."/>
            <person name="Waterman M.S."/>
            <person name="Eichler E.E."/>
            <person name="Adams M.D."/>
            <person name="Hunkapiller M.W."/>
            <person name="Myers E.W."/>
            <person name="Venter J.C."/>
        </authorList>
    </citation>
    <scope>NUCLEOTIDE SEQUENCE [LARGE SCALE GENOMIC DNA]</scope>
</reference>
<reference key="6">
    <citation type="journal article" date="2004" name="Genome Res.">
        <title>The status, quality, and expansion of the NIH full-length cDNA project: the Mammalian Gene Collection (MGC).</title>
        <authorList>
            <consortium name="The MGC Project Team"/>
        </authorList>
    </citation>
    <scope>NUCLEOTIDE SEQUENCE [LARGE SCALE MRNA] (ISOFORMS 1 AND 2)</scope>
    <source>
        <tissue>Brain</tissue>
        <tissue>Lung</tissue>
        <tissue>Pancreas</tissue>
    </source>
</reference>
<reference key="7">
    <citation type="journal article" date="2008" name="Biochem. J.">
        <title>Identification of the human N(alpha)-acetyltransferase complex B (hNatB): a complex important for cell-cycle progression.</title>
        <authorList>
            <person name="Starheim K.K."/>
            <person name="Arnesen T."/>
            <person name="Gromyko D."/>
            <person name="Ryningen A."/>
            <person name="Varhaug J.E."/>
            <person name="Lillehaug J.R."/>
        </authorList>
    </citation>
    <scope>FUNCTION</scope>
    <scope>CATALYTIC ACTIVITY</scope>
    <scope>INTERACTION WITH NAA25</scope>
    <scope>SUBCELLULAR LOCATION</scope>
</reference>
<reference key="8">
    <citation type="journal article" date="2009" name="BMC Proc.">
        <title>A synopsis of eukaryotic Nalpha-terminal acetyltransferases: nomenclature, subunits and substrates.</title>
        <authorList>
            <person name="Polevoda B."/>
            <person name="Arnesen T."/>
            <person name="Sherman F."/>
        </authorList>
    </citation>
    <scope>NOMENCLATURE</scope>
</reference>
<reference key="9">
    <citation type="journal article" date="2011" name="BMC Syst. Biol.">
        <title>Initial characterization of the human central proteome.</title>
        <authorList>
            <person name="Burkard T.R."/>
            <person name="Planyavsky M."/>
            <person name="Kaupe I."/>
            <person name="Breitwieser F.P."/>
            <person name="Buerckstuemmer T."/>
            <person name="Bennett K.L."/>
            <person name="Superti-Furga G."/>
            <person name="Colinge J."/>
        </authorList>
    </citation>
    <scope>IDENTIFICATION BY MASS SPECTROMETRY [LARGE SCALE ANALYSIS]</scope>
</reference>
<reference key="10">
    <citation type="journal article" date="2015" name="Cell Rep.">
        <title>An organellar nalpha-acetyltransferase, naa60, acetylates cytosolic N termini of transmembrane proteins and maintains Golgi integrity.</title>
        <authorList>
            <person name="Aksnes H."/>
            <person name="Van Damme P."/>
            <person name="Goris M."/>
            <person name="Starheim K.K."/>
            <person name="Marie M."/>
            <person name="Stoeve S.I."/>
            <person name="Hoel C."/>
            <person name="Kalvik T.V."/>
            <person name="Hole K."/>
            <person name="Glomnes N."/>
            <person name="Furnes C."/>
            <person name="Ljostveit S."/>
            <person name="Ziegler M."/>
            <person name="Niere M."/>
            <person name="Gevaert K."/>
            <person name="Arnesen T."/>
        </authorList>
    </citation>
    <scope>SUBCELLULAR LOCATION</scope>
</reference>
<reference key="11">
    <citation type="journal article" date="2021" name="Genet. Med.">
        <title>Missense NAA20 variants impairing the NatB protein N-terminal acetyltransferase cause autosomal recessive developmental delay, intellectual disability, and microcephaly.</title>
        <authorList>
            <person name="Morrison J."/>
            <person name="Altuwaijri N.K."/>
            <person name="Broenstad K."/>
            <person name="Aksnes H."/>
            <person name="Alsaif H.S."/>
            <person name="Evans A."/>
            <person name="Hashem M."/>
            <person name="Wheeler P.G."/>
            <person name="Webb B.D."/>
            <person name="Alkuraya F.S."/>
            <person name="Arnesen T."/>
        </authorList>
    </citation>
    <scope>INVOLVEMENT IN MRT73</scope>
    <scope>VARIANTS MRT73 VAL-54 AND VAL-80</scope>
    <scope>CHARACTERIZATION OF VARIANTS MRT73 VAL-54 AND VAL-80</scope>
    <scope>FUNCTION</scope>
    <scope>CATALYTIC ACTIVITY</scope>
    <scope>INTERACTION WITH NAA25</scope>
</reference>
<reference key="12">
    <citation type="journal article" date="2023" name="Clin. Genet.">
        <title>Novel biallelic variants expand the phenotype of NAA20-related syndrome.</title>
        <authorList>
            <person name="D'Onofrio G."/>
            <person name="Cuccurullo C."/>
            <person name="Larsen S.K."/>
            <person name="Severino M."/>
            <person name="D'Amico A."/>
            <person name="Broenstad K."/>
            <person name="AlOwain M."/>
            <person name="Morrison J.L."/>
            <person name="Wheeler P.G."/>
            <person name="Webb B.D."/>
            <person name="Alfalah A."/>
            <person name="Iacomino M."/>
            <person name="Uva P."/>
            <person name="Coppola A."/>
            <person name="Merla G."/>
            <person name="Salpietro V.D."/>
            <person name="Zara F."/>
            <person name="Striano P."/>
            <person name="Accogli A."/>
            <person name="Arnesen T."/>
            <person name="Bilo L."/>
        </authorList>
    </citation>
    <scope>INTERACTION WITH NAA25</scope>
    <scope>VARIANTS MRT73 PRO-4 AND 34-GLN--GLU-178 DEL</scope>
    <scope>CHARACTERIZATION OF VARIANT MRT73 PRO-4</scope>
</reference>
<sequence length="178" mass="20368">MTTLRAFTCDDLFRFNNINLDPLTETYGIPFYLQYLAHWPEYFIVAEAPGGELMGYIMGKAEGSVAREEWHGHVTALSVAPEFRRLGLAAKLMELLEEISERKGGFFVDLFVRVSNQVAVNMYKQLGYSVYRTVIEYYSASNGEPDEDAYDMRKALSRDTEKKSIIPLPHPVRPEDIE</sequence>
<accession>P61599</accession>
<accession>A6NHA3</accession>
<accession>B2R4G4</accession>
<accession>Q5TFT7</accession>
<accession>Q9D7H8</accession>
<accession>Q9H0Y4</accession>
<accession>Q9NQH6</accession>
<accession>Q9Y6D2</accession>
<comment type="function">
    <text evidence="2 4">Catalytic subunit of the NatB complex which catalyzes acetylation of the N-terminal methionine residues of peptides beginning with Met-Asp, Met-Glu, Met-Asn and Met-Gln (PubMed:34230638). Proteins with cell cycle functions are overrepresented in the pool of NatB substrates. Required for maintaining the structure and function of actomyosin fibers and for proper cellular migration.</text>
</comment>
<comment type="catalytic activity">
    <reaction evidence="2 4">
        <text>N-terminal L-methionyl-L-asparaginyl-[protein] + acetyl-CoA = N-terminal N(alpha)-acetyl-L-methionyl-L-asparaginyl-[protein] + CoA + H(+)</text>
        <dbReference type="Rhea" id="RHEA:50484"/>
        <dbReference type="Rhea" id="RHEA-COMP:12694"/>
        <dbReference type="Rhea" id="RHEA-COMP:12695"/>
        <dbReference type="ChEBI" id="CHEBI:15378"/>
        <dbReference type="ChEBI" id="CHEBI:57287"/>
        <dbReference type="ChEBI" id="CHEBI:57288"/>
        <dbReference type="ChEBI" id="CHEBI:133356"/>
        <dbReference type="ChEBI" id="CHEBI:133358"/>
        <dbReference type="EC" id="2.3.1.254"/>
    </reaction>
</comment>
<comment type="catalytic activity">
    <reaction evidence="2 4">
        <text>N-terminal L-methionyl-L-glutaminyl-[protein] + acetyl-CoA = N-terminal N(alpha)-acetyl-L-methionyl-L-glutaminyl-[protein] + CoA + H(+)</text>
        <dbReference type="Rhea" id="RHEA:50492"/>
        <dbReference type="Rhea" id="RHEA-COMP:12698"/>
        <dbReference type="Rhea" id="RHEA-COMP:12699"/>
        <dbReference type="ChEBI" id="CHEBI:15378"/>
        <dbReference type="ChEBI" id="CHEBI:57287"/>
        <dbReference type="ChEBI" id="CHEBI:57288"/>
        <dbReference type="ChEBI" id="CHEBI:133361"/>
        <dbReference type="ChEBI" id="CHEBI:133362"/>
        <dbReference type="EC" id="2.3.1.254"/>
    </reaction>
</comment>
<comment type="catalytic activity">
    <reaction evidence="2 4">
        <text>N-terminal L-methionyl-L-aspartyl-[protein] + acetyl-CoA = N-terminal N(alpha)-acetyl-L-methionyl-L-aspartyl-[protein] + CoA + H(+)</text>
        <dbReference type="Rhea" id="RHEA:50480"/>
        <dbReference type="Rhea" id="RHEA-COMP:12692"/>
        <dbReference type="Rhea" id="RHEA-COMP:12693"/>
        <dbReference type="ChEBI" id="CHEBI:15378"/>
        <dbReference type="ChEBI" id="CHEBI:57287"/>
        <dbReference type="ChEBI" id="CHEBI:57288"/>
        <dbReference type="ChEBI" id="CHEBI:133045"/>
        <dbReference type="ChEBI" id="CHEBI:133063"/>
        <dbReference type="EC" id="2.3.1.254"/>
    </reaction>
</comment>
<comment type="catalytic activity">
    <reaction evidence="2 4">
        <text>N-terminal L-methionyl-L-glutamyl-[protein] + acetyl-CoA = N-terminal N(alpha)-acetyl-L-methionyl-L-glutamyl-[protein] + CoA + H(+)</text>
        <dbReference type="Rhea" id="RHEA:50488"/>
        <dbReference type="Rhea" id="RHEA-COMP:12696"/>
        <dbReference type="Rhea" id="RHEA-COMP:12697"/>
        <dbReference type="ChEBI" id="CHEBI:15378"/>
        <dbReference type="ChEBI" id="CHEBI:57287"/>
        <dbReference type="ChEBI" id="CHEBI:57288"/>
        <dbReference type="ChEBI" id="CHEBI:133359"/>
        <dbReference type="ChEBI" id="CHEBI:133360"/>
        <dbReference type="EC" id="2.3.1.254"/>
    </reaction>
</comment>
<comment type="subunit">
    <text evidence="4 5">Component of the N-terminal acetyltransferase B (NatB) complex which is composed of NAA20 and NAA25.</text>
</comment>
<comment type="interaction">
    <interactant intactId="EBI-1055023">
        <id>P61599</id>
    </interactant>
    <interactant intactId="EBI-1048503">
        <id>Q14CX7</id>
        <label>NAA25</label>
    </interactant>
    <organismsDiffer>false</organismsDiffer>
    <experiments>2</experiments>
</comment>
<comment type="subcellular location">
    <subcellularLocation>
        <location evidence="2 3">Cytoplasm</location>
    </subcellularLocation>
    <subcellularLocation>
        <location evidence="2 3">Nucleus</location>
    </subcellularLocation>
</comment>
<comment type="alternative products">
    <event type="alternative splicing"/>
    <isoform>
        <id>P61599-1</id>
        <name>1</name>
        <sequence type="displayed"/>
    </isoform>
    <isoform>
        <id>P61599-2</id>
        <name>2</name>
        <sequence type="described" ref="VSP_045644"/>
    </isoform>
</comment>
<comment type="disease" evidence="4 5">
    <disease id="DI-06320">
        <name>Intellectual developmental disorder, autosomal recessive 73</name>
        <acronym>MRT73</acronym>
        <description>A form of intellectual disability, a disorder characterized by significantly below average general intellectual functioning associated with impairments in adaptive behavior and manifested during the developmental period. MRT73 patients manifest global developmental delay with hypotonia and mildly delayed walking, impaired intellectual development with poor or absent speech, and mildly dysmorphic features.</description>
        <dbReference type="MIM" id="619717"/>
    </disease>
    <text>The disease is caused by variants affecting the gene represented in this entry.</text>
</comment>
<comment type="similarity">
    <text evidence="7">Belongs to the acetyltransferase family. ARD1 subfamily.</text>
</comment>
<comment type="sequence caution" evidence="7">
    <conflict type="frameshift">
        <sequence resource="EMBL" id="BG548527"/>
    </conflict>
</comment>
<dbReference type="EC" id="2.3.1.254" evidence="2 4"/>
<dbReference type="EMBL" id="AF085355">
    <property type="protein sequence ID" value="AAD40190.1"/>
    <property type="molecule type" value="mRNA"/>
</dbReference>
<dbReference type="EMBL" id="AL136641">
    <property type="protein sequence ID" value="CAB66576.1"/>
    <property type="molecule type" value="mRNA"/>
</dbReference>
<dbReference type="EMBL" id="AK311819">
    <property type="protein sequence ID" value="BAG34761.1"/>
    <property type="molecule type" value="mRNA"/>
</dbReference>
<dbReference type="EMBL" id="AL049538">
    <property type="status" value="NOT_ANNOTATED_CDS"/>
    <property type="molecule type" value="Genomic_DNA"/>
</dbReference>
<dbReference type="EMBL" id="AL035454">
    <property type="status" value="NOT_ANNOTATED_CDS"/>
    <property type="molecule type" value="Genomic_DNA"/>
</dbReference>
<dbReference type="EMBL" id="CH471133">
    <property type="protein sequence ID" value="EAX10214.1"/>
    <property type="molecule type" value="Genomic_DNA"/>
</dbReference>
<dbReference type="EMBL" id="CH471133">
    <property type="protein sequence ID" value="EAX10215.1"/>
    <property type="molecule type" value="Genomic_DNA"/>
</dbReference>
<dbReference type="EMBL" id="BC005181">
    <property type="protein sequence ID" value="AAH05181.1"/>
    <property type="molecule type" value="mRNA"/>
</dbReference>
<dbReference type="EMBL" id="BC008446">
    <property type="protein sequence ID" value="AAH08446.1"/>
    <property type="molecule type" value="mRNA"/>
</dbReference>
<dbReference type="EMBL" id="BG548527">
    <property type="status" value="NOT_ANNOTATED_CDS"/>
    <property type="molecule type" value="mRNA"/>
</dbReference>
<dbReference type="CCDS" id="CCDS13141.1">
    <molecule id="P61599-1"/>
</dbReference>
<dbReference type="CCDS" id="CCDS13142.1">
    <molecule id="P61599-2"/>
</dbReference>
<dbReference type="RefSeq" id="NP_057184.1">
    <molecule id="P61599-1"/>
    <property type="nucleotide sequence ID" value="NM_016100.5"/>
</dbReference>
<dbReference type="RefSeq" id="NP_852669.1">
    <molecule id="P61599-2"/>
    <property type="nucleotide sequence ID" value="NM_181528.3"/>
</dbReference>
<dbReference type="PDB" id="6VP9">
    <property type="method" value="EM"/>
    <property type="resolution" value="3.46 A"/>
    <property type="chains" value="A=1-163"/>
</dbReference>
<dbReference type="PDB" id="7STX">
    <property type="method" value="EM"/>
    <property type="resolution" value="3.14 A"/>
    <property type="chains" value="A=1-178"/>
</dbReference>
<dbReference type="PDB" id="8G0L">
    <property type="method" value="EM"/>
    <property type="resolution" value="3.39 A"/>
    <property type="chains" value="A=1-178"/>
</dbReference>
<dbReference type="PDBsum" id="6VP9"/>
<dbReference type="PDBsum" id="7STX"/>
<dbReference type="PDBsum" id="8G0L"/>
<dbReference type="EMDB" id="EMD-21307"/>
<dbReference type="EMDB" id="EMD-25438"/>
<dbReference type="EMDB" id="EMD-29657"/>
<dbReference type="SMR" id="P61599"/>
<dbReference type="BioGRID" id="119313">
    <property type="interactions" value="27"/>
</dbReference>
<dbReference type="ComplexPortal" id="CPX-6270">
    <property type="entry name" value="NatB N-alpha-acetyltransferase complex"/>
</dbReference>
<dbReference type="CORUM" id="P61599"/>
<dbReference type="FunCoup" id="P61599">
    <property type="interactions" value="3094"/>
</dbReference>
<dbReference type="IntAct" id="P61599">
    <property type="interactions" value="5"/>
</dbReference>
<dbReference type="STRING" id="9606.ENSP00000335636"/>
<dbReference type="GlyGen" id="P61599">
    <property type="glycosylation" value="1 site, 1 O-linked glycan (1 site)"/>
</dbReference>
<dbReference type="iPTMnet" id="P61599"/>
<dbReference type="PhosphoSitePlus" id="P61599"/>
<dbReference type="BioMuta" id="NAA20"/>
<dbReference type="DMDM" id="47606438"/>
<dbReference type="jPOST" id="P61599"/>
<dbReference type="MassIVE" id="P61599"/>
<dbReference type="PaxDb" id="9606-ENSP00000335636"/>
<dbReference type="PeptideAtlas" id="P61599"/>
<dbReference type="ProteomicsDB" id="1184"/>
<dbReference type="ProteomicsDB" id="57323">
    <molecule id="P61599-1"/>
</dbReference>
<dbReference type="Pumba" id="P61599"/>
<dbReference type="TopDownProteomics" id="P61599-1">
    <molecule id="P61599-1"/>
</dbReference>
<dbReference type="Antibodypedia" id="24668">
    <property type="antibodies" value="140 antibodies from 26 providers"/>
</dbReference>
<dbReference type="DNASU" id="51126"/>
<dbReference type="Ensembl" id="ENST00000310450.8">
    <molecule id="P61599-2"/>
    <property type="protein sequence ID" value="ENSP00000311027.4"/>
    <property type="gene ID" value="ENSG00000173418.12"/>
</dbReference>
<dbReference type="Ensembl" id="ENST00000334982.9">
    <molecule id="P61599-1"/>
    <property type="protein sequence ID" value="ENSP00000335636.4"/>
    <property type="gene ID" value="ENSG00000173418.12"/>
</dbReference>
<dbReference type="GeneID" id="51126"/>
<dbReference type="KEGG" id="hsa:51126"/>
<dbReference type="MANE-Select" id="ENST00000334982.9">
    <property type="protein sequence ID" value="ENSP00000335636.4"/>
    <property type="RefSeq nucleotide sequence ID" value="NM_016100.5"/>
    <property type="RefSeq protein sequence ID" value="NP_057184.1"/>
</dbReference>
<dbReference type="UCSC" id="uc002wrp.4">
    <molecule id="P61599-1"/>
    <property type="organism name" value="human"/>
</dbReference>
<dbReference type="AGR" id="HGNC:15908"/>
<dbReference type="CTD" id="51126"/>
<dbReference type="DisGeNET" id="51126"/>
<dbReference type="GeneCards" id="NAA20"/>
<dbReference type="HGNC" id="HGNC:15908">
    <property type="gene designation" value="NAA20"/>
</dbReference>
<dbReference type="HPA" id="ENSG00000173418">
    <property type="expression patterns" value="Low tissue specificity"/>
</dbReference>
<dbReference type="MalaCards" id="NAA20"/>
<dbReference type="MIM" id="610833">
    <property type="type" value="gene"/>
</dbReference>
<dbReference type="MIM" id="619717">
    <property type="type" value="phenotype"/>
</dbReference>
<dbReference type="neXtProt" id="NX_P61599"/>
<dbReference type="OpenTargets" id="ENSG00000173418"/>
<dbReference type="Orphanet" id="88616">
    <property type="disease" value="Autosomal recessive non-syndromic intellectual disability"/>
</dbReference>
<dbReference type="PharmGKB" id="PA31449"/>
<dbReference type="VEuPathDB" id="HostDB:ENSG00000173418"/>
<dbReference type="eggNOG" id="KOG3234">
    <property type="taxonomic scope" value="Eukaryota"/>
</dbReference>
<dbReference type="GeneTree" id="ENSGT00550000075046"/>
<dbReference type="HOGENOM" id="CLU_013985_7_1_1"/>
<dbReference type="InParanoid" id="P61599"/>
<dbReference type="OMA" id="EQHPSMR"/>
<dbReference type="OrthoDB" id="10264728at2759"/>
<dbReference type="PAN-GO" id="P61599">
    <property type="GO annotations" value="3 GO annotations based on evolutionary models"/>
</dbReference>
<dbReference type="PhylomeDB" id="P61599"/>
<dbReference type="TreeFam" id="TF105829"/>
<dbReference type="BioCyc" id="MetaCyc:HS10662-MONOMER"/>
<dbReference type="BRENDA" id="2.3.1.254">
    <property type="organism ID" value="2681"/>
</dbReference>
<dbReference type="PathwayCommons" id="P61599"/>
<dbReference type="SignaLink" id="P61599"/>
<dbReference type="SIGNOR" id="P61599"/>
<dbReference type="BioGRID-ORCS" id="51126">
    <property type="hits" value="657 hits in 1173 CRISPR screens"/>
</dbReference>
<dbReference type="ChiTaRS" id="NAA20">
    <property type="organism name" value="human"/>
</dbReference>
<dbReference type="GeneWiki" id="NAT5"/>
<dbReference type="GenomeRNAi" id="51126"/>
<dbReference type="Pharos" id="P61599">
    <property type="development level" value="Tbio"/>
</dbReference>
<dbReference type="PRO" id="PR:P61599"/>
<dbReference type="Proteomes" id="UP000005640">
    <property type="component" value="Chromosome 20"/>
</dbReference>
<dbReference type="RNAct" id="P61599">
    <property type="molecule type" value="protein"/>
</dbReference>
<dbReference type="Bgee" id="ENSG00000173418">
    <property type="expression patterns" value="Expressed in islet of Langerhans and 185 other cell types or tissues"/>
</dbReference>
<dbReference type="ExpressionAtlas" id="P61599">
    <property type="expression patterns" value="baseline and differential"/>
</dbReference>
<dbReference type="GO" id="GO:0005737">
    <property type="term" value="C:cytoplasm"/>
    <property type="evidence" value="ECO:0000314"/>
    <property type="project" value="UniProtKB"/>
</dbReference>
<dbReference type="GO" id="GO:0005829">
    <property type="term" value="C:cytosol"/>
    <property type="evidence" value="ECO:0000314"/>
    <property type="project" value="HPA"/>
</dbReference>
<dbReference type="GO" id="GO:0031416">
    <property type="term" value="C:NatB complex"/>
    <property type="evidence" value="ECO:0000353"/>
    <property type="project" value="ComplexPortal"/>
</dbReference>
<dbReference type="GO" id="GO:0005634">
    <property type="term" value="C:nucleus"/>
    <property type="evidence" value="ECO:0000314"/>
    <property type="project" value="UniProtKB"/>
</dbReference>
<dbReference type="GO" id="GO:0120518">
    <property type="term" value="F:protein N-terminal-methionine acetyltransferase activity"/>
    <property type="evidence" value="ECO:0007669"/>
    <property type="project" value="UniProtKB-EC"/>
</dbReference>
<dbReference type="GO" id="GO:0004596">
    <property type="term" value="F:protein-N-terminal amino-acid acetyltransferase activity"/>
    <property type="evidence" value="ECO:0000318"/>
    <property type="project" value="GO_Central"/>
</dbReference>
<dbReference type="GO" id="GO:0017190">
    <property type="term" value="P:N-terminal peptidyl-aspartic acid acetylation"/>
    <property type="evidence" value="ECO:0000314"/>
    <property type="project" value="UniProtKB"/>
</dbReference>
<dbReference type="GO" id="GO:0018002">
    <property type="term" value="P:N-terminal peptidyl-glutamic acid acetylation"/>
    <property type="evidence" value="ECO:0000314"/>
    <property type="project" value="UniProtKB"/>
</dbReference>
<dbReference type="GO" id="GO:0017192">
    <property type="term" value="P:N-terminal peptidyl-glutamine acetylation"/>
    <property type="evidence" value="ECO:0000314"/>
    <property type="project" value="UniProtKB"/>
</dbReference>
<dbReference type="GO" id="GO:0006474">
    <property type="term" value="P:N-terminal protein amino acid acetylation"/>
    <property type="evidence" value="ECO:0000314"/>
    <property type="project" value="UniProtKB"/>
</dbReference>
<dbReference type="GO" id="GO:0032956">
    <property type="term" value="P:regulation of actin cytoskeleton organization"/>
    <property type="evidence" value="ECO:0000318"/>
    <property type="project" value="GO_Central"/>
</dbReference>
<dbReference type="CDD" id="cd04301">
    <property type="entry name" value="NAT_SF"/>
    <property type="match status" value="1"/>
</dbReference>
<dbReference type="FunFam" id="3.40.630.30:FF:000015">
    <property type="entry name" value="N-alpha-acetyltransferase 20 isoform X1"/>
    <property type="match status" value="1"/>
</dbReference>
<dbReference type="Gene3D" id="3.40.630.30">
    <property type="match status" value="1"/>
</dbReference>
<dbReference type="InterPro" id="IPR016181">
    <property type="entry name" value="Acyl_CoA_acyltransferase"/>
</dbReference>
<dbReference type="InterPro" id="IPR000182">
    <property type="entry name" value="GNAT_dom"/>
</dbReference>
<dbReference type="InterPro" id="IPR051646">
    <property type="entry name" value="NatB_acetyltransferase_subunit"/>
</dbReference>
<dbReference type="PANTHER" id="PTHR45910">
    <property type="entry name" value="N-ALPHA-ACETYLTRANSFERASE 20"/>
    <property type="match status" value="1"/>
</dbReference>
<dbReference type="PANTHER" id="PTHR45910:SF1">
    <property type="entry name" value="N-ALPHA-ACETYLTRANSFERASE 20"/>
    <property type="match status" value="1"/>
</dbReference>
<dbReference type="Pfam" id="PF00583">
    <property type="entry name" value="Acetyltransf_1"/>
    <property type="match status" value="1"/>
</dbReference>
<dbReference type="SUPFAM" id="SSF55729">
    <property type="entry name" value="Acyl-CoA N-acyltransferases (Nat)"/>
    <property type="match status" value="1"/>
</dbReference>
<dbReference type="PROSITE" id="PS51186">
    <property type="entry name" value="GNAT"/>
    <property type="match status" value="1"/>
</dbReference>
<proteinExistence type="evidence at protein level"/>
<organism>
    <name type="scientific">Homo sapiens</name>
    <name type="common">Human</name>
    <dbReference type="NCBI Taxonomy" id="9606"/>
    <lineage>
        <taxon>Eukaryota</taxon>
        <taxon>Metazoa</taxon>
        <taxon>Chordata</taxon>
        <taxon>Craniata</taxon>
        <taxon>Vertebrata</taxon>
        <taxon>Euteleostomi</taxon>
        <taxon>Mammalia</taxon>
        <taxon>Eutheria</taxon>
        <taxon>Euarchontoglires</taxon>
        <taxon>Primates</taxon>
        <taxon>Haplorrhini</taxon>
        <taxon>Catarrhini</taxon>
        <taxon>Hominidae</taxon>
        <taxon>Homo</taxon>
    </lineage>
</organism>